<gene>
    <name evidence="1" type="primary">queF</name>
    <name type="ordered locus">Reut_A0412</name>
</gene>
<name>QUEF_CUPPJ</name>
<keyword id="KW-0963">Cytoplasm</keyword>
<keyword id="KW-0521">NADP</keyword>
<keyword id="KW-0560">Oxidoreductase</keyword>
<keyword id="KW-0671">Queuosine biosynthesis</keyword>
<proteinExistence type="inferred from homology"/>
<protein>
    <recommendedName>
        <fullName evidence="1">NADPH-dependent 7-cyano-7-deazaguanine reductase</fullName>
        <ecNumber evidence="1">1.7.1.13</ecNumber>
    </recommendedName>
    <alternativeName>
        <fullName evidence="1">7-cyano-7-carbaguanine reductase</fullName>
    </alternativeName>
    <alternativeName>
        <fullName evidence="1">NADPH-dependent nitrile oxidoreductase</fullName>
    </alternativeName>
    <alternativeName>
        <fullName evidence="1">PreQ(0) reductase</fullName>
    </alternativeName>
</protein>
<evidence type="ECO:0000255" key="1">
    <source>
        <dbReference type="HAMAP-Rule" id="MF_00817"/>
    </source>
</evidence>
<accession>Q475Y9</accession>
<feature type="chain" id="PRO_0000247714" description="NADPH-dependent 7-cyano-7-deazaguanine reductase">
    <location>
        <begin position="1"/>
        <end position="277"/>
    </location>
</feature>
<feature type="active site" description="Thioimide intermediate" evidence="1">
    <location>
        <position position="184"/>
    </location>
</feature>
<feature type="active site" description="Proton donor" evidence="1">
    <location>
        <position position="191"/>
    </location>
</feature>
<feature type="binding site" evidence="1">
    <location>
        <begin position="83"/>
        <end position="85"/>
    </location>
    <ligand>
        <name>substrate</name>
    </ligand>
</feature>
<feature type="binding site" evidence="1">
    <location>
        <begin position="85"/>
        <end position="86"/>
    </location>
    <ligand>
        <name>NADPH</name>
        <dbReference type="ChEBI" id="CHEBI:57783"/>
    </ligand>
</feature>
<feature type="binding site" evidence="1">
    <location>
        <begin position="223"/>
        <end position="224"/>
    </location>
    <ligand>
        <name>substrate</name>
    </ligand>
</feature>
<feature type="binding site" evidence="1">
    <location>
        <begin position="252"/>
        <end position="253"/>
    </location>
    <ligand>
        <name>NADPH</name>
        <dbReference type="ChEBI" id="CHEBI:57783"/>
    </ligand>
</feature>
<organism>
    <name type="scientific">Cupriavidus pinatubonensis (strain JMP 134 / LMG 1197)</name>
    <name type="common">Cupriavidus necator (strain JMP 134)</name>
    <dbReference type="NCBI Taxonomy" id="264198"/>
    <lineage>
        <taxon>Bacteria</taxon>
        <taxon>Pseudomonadati</taxon>
        <taxon>Pseudomonadota</taxon>
        <taxon>Betaproteobacteria</taxon>
        <taxon>Burkholderiales</taxon>
        <taxon>Burkholderiaceae</taxon>
        <taxon>Cupriavidus</taxon>
    </lineage>
</organism>
<dbReference type="EC" id="1.7.1.13" evidence="1"/>
<dbReference type="EMBL" id="CP000090">
    <property type="protein sequence ID" value="AAZ59794.1"/>
    <property type="molecule type" value="Genomic_DNA"/>
</dbReference>
<dbReference type="SMR" id="Q475Y9"/>
<dbReference type="STRING" id="264198.Reut_A0412"/>
<dbReference type="KEGG" id="reu:Reut_A0412"/>
<dbReference type="eggNOG" id="COG0780">
    <property type="taxonomic scope" value="Bacteria"/>
</dbReference>
<dbReference type="eggNOG" id="COG2904">
    <property type="taxonomic scope" value="Bacteria"/>
</dbReference>
<dbReference type="HOGENOM" id="CLU_054738_0_0_4"/>
<dbReference type="OrthoDB" id="9789995at2"/>
<dbReference type="UniPathway" id="UPA00392"/>
<dbReference type="GO" id="GO:0005737">
    <property type="term" value="C:cytoplasm"/>
    <property type="evidence" value="ECO:0007669"/>
    <property type="project" value="UniProtKB-SubCell"/>
</dbReference>
<dbReference type="GO" id="GO:0033739">
    <property type="term" value="F:preQ1 synthase activity"/>
    <property type="evidence" value="ECO:0007669"/>
    <property type="project" value="UniProtKB-UniRule"/>
</dbReference>
<dbReference type="GO" id="GO:0008616">
    <property type="term" value="P:queuosine biosynthetic process"/>
    <property type="evidence" value="ECO:0007669"/>
    <property type="project" value="UniProtKB-UniRule"/>
</dbReference>
<dbReference type="GO" id="GO:0006400">
    <property type="term" value="P:tRNA modification"/>
    <property type="evidence" value="ECO:0007669"/>
    <property type="project" value="UniProtKB-UniRule"/>
</dbReference>
<dbReference type="Gene3D" id="3.30.1130.10">
    <property type="match status" value="2"/>
</dbReference>
<dbReference type="HAMAP" id="MF_00817">
    <property type="entry name" value="QueF_type2"/>
    <property type="match status" value="1"/>
</dbReference>
<dbReference type="InterPro" id="IPR043133">
    <property type="entry name" value="GTP-CH-I_C/QueF"/>
</dbReference>
<dbReference type="InterPro" id="IPR050084">
    <property type="entry name" value="NADPH_dep_7-cyano-7-deazaG_red"/>
</dbReference>
<dbReference type="InterPro" id="IPR029500">
    <property type="entry name" value="QueF"/>
</dbReference>
<dbReference type="InterPro" id="IPR029139">
    <property type="entry name" value="QueF_N"/>
</dbReference>
<dbReference type="InterPro" id="IPR016428">
    <property type="entry name" value="QueF_type2"/>
</dbReference>
<dbReference type="NCBIfam" id="TIGR03138">
    <property type="entry name" value="QueF"/>
    <property type="match status" value="1"/>
</dbReference>
<dbReference type="PANTHER" id="PTHR34354">
    <property type="entry name" value="NADPH-DEPENDENT 7-CYANO-7-DEAZAGUANINE REDUCTASE"/>
    <property type="match status" value="1"/>
</dbReference>
<dbReference type="PANTHER" id="PTHR34354:SF1">
    <property type="entry name" value="NADPH-DEPENDENT 7-CYANO-7-DEAZAGUANINE REDUCTASE"/>
    <property type="match status" value="1"/>
</dbReference>
<dbReference type="Pfam" id="PF14489">
    <property type="entry name" value="QueF"/>
    <property type="match status" value="1"/>
</dbReference>
<dbReference type="Pfam" id="PF14819">
    <property type="entry name" value="QueF_N"/>
    <property type="match status" value="1"/>
</dbReference>
<dbReference type="PIRSF" id="PIRSF004750">
    <property type="entry name" value="Nitrile_oxidored_YqcD_prd"/>
    <property type="match status" value="1"/>
</dbReference>
<dbReference type="SUPFAM" id="SSF55620">
    <property type="entry name" value="Tetrahydrobiopterin biosynthesis enzymes-like"/>
    <property type="match status" value="1"/>
</dbReference>
<comment type="function">
    <text evidence="1">Catalyzes the NADPH-dependent reduction of 7-cyano-7-deazaguanine (preQ0) to 7-aminomethyl-7-deazaguanine (preQ1).</text>
</comment>
<comment type="catalytic activity">
    <reaction evidence="1">
        <text>7-aminomethyl-7-carbaguanine + 2 NADP(+) = 7-cyano-7-deazaguanine + 2 NADPH + 3 H(+)</text>
        <dbReference type="Rhea" id="RHEA:13409"/>
        <dbReference type="ChEBI" id="CHEBI:15378"/>
        <dbReference type="ChEBI" id="CHEBI:45075"/>
        <dbReference type="ChEBI" id="CHEBI:57783"/>
        <dbReference type="ChEBI" id="CHEBI:58349"/>
        <dbReference type="ChEBI" id="CHEBI:58703"/>
        <dbReference type="EC" id="1.7.1.13"/>
    </reaction>
</comment>
<comment type="pathway">
    <text evidence="1">tRNA modification; tRNA-queuosine biosynthesis.</text>
</comment>
<comment type="subunit">
    <text evidence="1">Homodimer.</text>
</comment>
<comment type="subcellular location">
    <subcellularLocation>
        <location evidence="1">Cytoplasm</location>
    </subcellularLocation>
</comment>
<comment type="similarity">
    <text evidence="1">Belongs to the GTP cyclohydrolase I family. QueF type 2 subfamily.</text>
</comment>
<sequence>MSLPEHSPLGKPSAYKTEYDATLLFPIARQPKRTEIGLPAGKPVPFFGVDIWNAYEVSWLNMRGKPQVALATFIIPSDTPNIIESKSFKLYLNSFNQTKIASPEALQQLLHHDLSEATGGTVQVRLVTEADLGKQKMGELEGLLLDRLDIEVDRYEPAPDLLKADQQESPVEETLVSHLLKSNCLVTGQPDWGSVQIRYVGAPINQEGLLKYLISFRNHNEFHEQCVERIFMDVMRECKPVKLAVYARYTRRGGLDINPFRTNFNTPWPDNLRNARQ</sequence>
<reference key="1">
    <citation type="journal article" date="2010" name="PLoS ONE">
        <title>The complete multipartite genome sequence of Cupriavidus necator JMP134, a versatile pollutant degrader.</title>
        <authorList>
            <person name="Lykidis A."/>
            <person name="Perez-Pantoja D."/>
            <person name="Ledger T."/>
            <person name="Mavromatis K."/>
            <person name="Anderson I.J."/>
            <person name="Ivanova N.N."/>
            <person name="Hooper S.D."/>
            <person name="Lapidus A."/>
            <person name="Lucas S."/>
            <person name="Gonzalez B."/>
            <person name="Kyrpides N.C."/>
        </authorList>
    </citation>
    <scope>NUCLEOTIDE SEQUENCE [LARGE SCALE GENOMIC DNA]</scope>
    <source>
        <strain>JMP134 / LMG 1197</strain>
    </source>
</reference>